<feature type="chain" id="PRO_1000212775" description="Large ribosomal subunit protein uL11">
    <location>
        <begin position="1"/>
        <end position="140"/>
    </location>
</feature>
<organism>
    <name type="scientific">Gemmatimonas aurantiaca (strain DSM 14586 / JCM 11422 / NBRC 100505 / T-27)</name>
    <dbReference type="NCBI Taxonomy" id="379066"/>
    <lineage>
        <taxon>Bacteria</taxon>
        <taxon>Pseudomonadati</taxon>
        <taxon>Gemmatimonadota</taxon>
        <taxon>Gemmatimonadia</taxon>
        <taxon>Gemmatimonadales</taxon>
        <taxon>Gemmatimonadaceae</taxon>
        <taxon>Gemmatimonas</taxon>
    </lineage>
</organism>
<dbReference type="EMBL" id="AP009153">
    <property type="protein sequence ID" value="BAH37893.1"/>
    <property type="molecule type" value="Genomic_DNA"/>
</dbReference>
<dbReference type="RefSeq" id="WP_012682340.1">
    <property type="nucleotide sequence ID" value="NC_012489.1"/>
</dbReference>
<dbReference type="SMR" id="C1A6N3"/>
<dbReference type="STRING" id="379066.GAU_0851"/>
<dbReference type="KEGG" id="gau:GAU_0851"/>
<dbReference type="eggNOG" id="COG0080">
    <property type="taxonomic scope" value="Bacteria"/>
</dbReference>
<dbReference type="HOGENOM" id="CLU_074237_2_1_0"/>
<dbReference type="OrthoDB" id="9802408at2"/>
<dbReference type="Proteomes" id="UP000002209">
    <property type="component" value="Chromosome"/>
</dbReference>
<dbReference type="GO" id="GO:0022625">
    <property type="term" value="C:cytosolic large ribosomal subunit"/>
    <property type="evidence" value="ECO:0007669"/>
    <property type="project" value="TreeGrafter"/>
</dbReference>
<dbReference type="GO" id="GO:0070180">
    <property type="term" value="F:large ribosomal subunit rRNA binding"/>
    <property type="evidence" value="ECO:0007669"/>
    <property type="project" value="UniProtKB-UniRule"/>
</dbReference>
<dbReference type="GO" id="GO:0003735">
    <property type="term" value="F:structural constituent of ribosome"/>
    <property type="evidence" value="ECO:0007669"/>
    <property type="project" value="InterPro"/>
</dbReference>
<dbReference type="GO" id="GO:0006412">
    <property type="term" value="P:translation"/>
    <property type="evidence" value="ECO:0007669"/>
    <property type="project" value="UniProtKB-UniRule"/>
</dbReference>
<dbReference type="CDD" id="cd00349">
    <property type="entry name" value="Ribosomal_L11"/>
    <property type="match status" value="1"/>
</dbReference>
<dbReference type="FunFam" id="1.10.10.250:FF:000001">
    <property type="entry name" value="50S ribosomal protein L11"/>
    <property type="match status" value="1"/>
</dbReference>
<dbReference type="FunFam" id="3.30.1550.10:FF:000005">
    <property type="entry name" value="50S ribosomal protein L11"/>
    <property type="match status" value="1"/>
</dbReference>
<dbReference type="Gene3D" id="1.10.10.250">
    <property type="entry name" value="Ribosomal protein L11, C-terminal domain"/>
    <property type="match status" value="1"/>
</dbReference>
<dbReference type="Gene3D" id="3.30.1550.10">
    <property type="entry name" value="Ribosomal protein L11/L12, N-terminal domain"/>
    <property type="match status" value="1"/>
</dbReference>
<dbReference type="HAMAP" id="MF_00736">
    <property type="entry name" value="Ribosomal_uL11"/>
    <property type="match status" value="1"/>
</dbReference>
<dbReference type="InterPro" id="IPR000911">
    <property type="entry name" value="Ribosomal_uL11"/>
</dbReference>
<dbReference type="InterPro" id="IPR006519">
    <property type="entry name" value="Ribosomal_uL11_bac-typ"/>
</dbReference>
<dbReference type="InterPro" id="IPR020783">
    <property type="entry name" value="Ribosomal_uL11_C"/>
</dbReference>
<dbReference type="InterPro" id="IPR036769">
    <property type="entry name" value="Ribosomal_uL11_C_sf"/>
</dbReference>
<dbReference type="InterPro" id="IPR020784">
    <property type="entry name" value="Ribosomal_uL11_N"/>
</dbReference>
<dbReference type="InterPro" id="IPR036796">
    <property type="entry name" value="Ribosomal_uL11_N_sf"/>
</dbReference>
<dbReference type="NCBIfam" id="TIGR01632">
    <property type="entry name" value="L11_bact"/>
    <property type="match status" value="1"/>
</dbReference>
<dbReference type="PANTHER" id="PTHR11661">
    <property type="entry name" value="60S RIBOSOMAL PROTEIN L12"/>
    <property type="match status" value="1"/>
</dbReference>
<dbReference type="PANTHER" id="PTHR11661:SF1">
    <property type="entry name" value="LARGE RIBOSOMAL SUBUNIT PROTEIN UL11M"/>
    <property type="match status" value="1"/>
</dbReference>
<dbReference type="Pfam" id="PF00298">
    <property type="entry name" value="Ribosomal_L11"/>
    <property type="match status" value="1"/>
</dbReference>
<dbReference type="Pfam" id="PF03946">
    <property type="entry name" value="Ribosomal_L11_N"/>
    <property type="match status" value="1"/>
</dbReference>
<dbReference type="SMART" id="SM00649">
    <property type="entry name" value="RL11"/>
    <property type="match status" value="1"/>
</dbReference>
<dbReference type="SUPFAM" id="SSF54747">
    <property type="entry name" value="Ribosomal L11/L12e N-terminal domain"/>
    <property type="match status" value="1"/>
</dbReference>
<dbReference type="SUPFAM" id="SSF46906">
    <property type="entry name" value="Ribosomal protein L11, C-terminal domain"/>
    <property type="match status" value="1"/>
</dbReference>
<evidence type="ECO:0000255" key="1">
    <source>
        <dbReference type="HAMAP-Rule" id="MF_00736"/>
    </source>
</evidence>
<evidence type="ECO:0000305" key="2"/>
<sequence length="140" mass="14761">MAKKVTGFVKLQIPAGKANPAPPVGTALGPQGINIMGFCKEFNARTQGGDMIIPVEVTIYADKSFTFILKTPPAAELIKKELGVERGSGQPNKVKVGTITRAQLEKIATTKMPDLNCESMESAVAMIAGAARSMGITVKD</sequence>
<accession>C1A6N3</accession>
<reference key="1">
    <citation type="submission" date="2006-03" db="EMBL/GenBank/DDBJ databases">
        <title>Complete genome sequence of Gemmatimonas aurantiaca T-27 that represents a novel phylum Gemmatimonadetes.</title>
        <authorList>
            <person name="Takasaki K."/>
            <person name="Ichikawa N."/>
            <person name="Miura H."/>
            <person name="Matsushita S."/>
            <person name="Watanabe Y."/>
            <person name="Oguchi A."/>
            <person name="Ankai A."/>
            <person name="Yashiro I."/>
            <person name="Takahashi M."/>
            <person name="Terui Y."/>
            <person name="Fukui S."/>
            <person name="Yokoyama H."/>
            <person name="Tanikawa S."/>
            <person name="Hanada S."/>
            <person name="Kamagata Y."/>
            <person name="Fujita N."/>
        </authorList>
    </citation>
    <scope>NUCLEOTIDE SEQUENCE [LARGE SCALE GENOMIC DNA]</scope>
    <source>
        <strain>DSM 14586 / JCM 11422 / NBRC 100505 / T-27</strain>
    </source>
</reference>
<comment type="function">
    <text evidence="1">Forms part of the ribosomal stalk which helps the ribosome interact with GTP-bound translation factors.</text>
</comment>
<comment type="subunit">
    <text evidence="1">Part of the ribosomal stalk of the 50S ribosomal subunit. Interacts with L10 and the large rRNA to form the base of the stalk. L10 forms an elongated spine to which L12 dimers bind in a sequential fashion forming a multimeric L10(L12)X complex.</text>
</comment>
<comment type="PTM">
    <text evidence="1">One or more lysine residues are methylated.</text>
</comment>
<comment type="similarity">
    <text evidence="1">Belongs to the universal ribosomal protein uL11 family.</text>
</comment>
<proteinExistence type="inferred from homology"/>
<gene>
    <name evidence="1" type="primary">rplK</name>
    <name type="ordered locus">GAU_0851</name>
</gene>
<keyword id="KW-0488">Methylation</keyword>
<keyword id="KW-1185">Reference proteome</keyword>
<keyword id="KW-0687">Ribonucleoprotein</keyword>
<keyword id="KW-0689">Ribosomal protein</keyword>
<keyword id="KW-0694">RNA-binding</keyword>
<keyword id="KW-0699">rRNA-binding</keyword>
<protein>
    <recommendedName>
        <fullName evidence="1">Large ribosomal subunit protein uL11</fullName>
    </recommendedName>
    <alternativeName>
        <fullName evidence="2">50S ribosomal protein L11</fullName>
    </alternativeName>
</protein>
<name>RL11_GEMAT</name>